<dbReference type="EMBL" id="M19930">
    <property type="protein sequence ID" value="AAA25806.1"/>
    <property type="molecule type" value="Genomic_DNA"/>
</dbReference>
<dbReference type="PIR" id="A32018">
    <property type="entry name" value="KSPSCY"/>
</dbReference>
<dbReference type="RefSeq" id="WP_054090693.1">
    <property type="nucleotide sequence ID" value="NZ_SNVE01000046.1"/>
</dbReference>
<dbReference type="SMR" id="P12374"/>
<dbReference type="GO" id="GO:0042597">
    <property type="term" value="C:periplasmic space"/>
    <property type="evidence" value="ECO:0007669"/>
    <property type="project" value="UniProtKB-SubCell"/>
</dbReference>
<dbReference type="GO" id="GO:0005507">
    <property type="term" value="F:copper ion binding"/>
    <property type="evidence" value="ECO:0007669"/>
    <property type="project" value="InterPro"/>
</dbReference>
<dbReference type="GO" id="GO:0016491">
    <property type="term" value="F:oxidoreductase activity"/>
    <property type="evidence" value="ECO:0007669"/>
    <property type="project" value="UniProtKB-KW"/>
</dbReference>
<dbReference type="CDD" id="cd13848">
    <property type="entry name" value="CuRO_1_CopA"/>
    <property type="match status" value="1"/>
</dbReference>
<dbReference type="CDD" id="cd13874">
    <property type="entry name" value="CuRO_2_CopA"/>
    <property type="match status" value="1"/>
</dbReference>
<dbReference type="CDD" id="cd13896">
    <property type="entry name" value="CuRO_3_CopA"/>
    <property type="match status" value="1"/>
</dbReference>
<dbReference type="Gene3D" id="2.60.40.420">
    <property type="entry name" value="Cupredoxins - blue copper proteins"/>
    <property type="match status" value="3"/>
</dbReference>
<dbReference type="InterPro" id="IPR011707">
    <property type="entry name" value="Cu-oxidase-like_N"/>
</dbReference>
<dbReference type="InterPro" id="IPR001117">
    <property type="entry name" value="Cu-oxidase_2nd"/>
</dbReference>
<dbReference type="InterPro" id="IPR011706">
    <property type="entry name" value="Cu-oxidase_C"/>
</dbReference>
<dbReference type="InterPro" id="IPR045087">
    <property type="entry name" value="Cu-oxidase_fam"/>
</dbReference>
<dbReference type="InterPro" id="IPR006376">
    <property type="entry name" value="Cu-R_CopA"/>
</dbReference>
<dbReference type="InterPro" id="IPR033138">
    <property type="entry name" value="Cu_oxidase_CS"/>
</dbReference>
<dbReference type="InterPro" id="IPR002355">
    <property type="entry name" value="Cu_oxidase_Cu_BS"/>
</dbReference>
<dbReference type="InterPro" id="IPR008972">
    <property type="entry name" value="Cupredoxin"/>
</dbReference>
<dbReference type="InterPro" id="IPR034284">
    <property type="entry name" value="CuRO_1_CopA"/>
</dbReference>
<dbReference type="InterPro" id="IPR034282">
    <property type="entry name" value="CuRO_2_CopA"/>
</dbReference>
<dbReference type="InterPro" id="IPR034279">
    <property type="entry name" value="CuRO_3_CopA"/>
</dbReference>
<dbReference type="InterPro" id="IPR006311">
    <property type="entry name" value="TAT_signal"/>
</dbReference>
<dbReference type="InterPro" id="IPR019546">
    <property type="entry name" value="TAT_signal_bac_arc"/>
</dbReference>
<dbReference type="NCBIfam" id="TIGR01480">
    <property type="entry name" value="copper_res_A"/>
    <property type="match status" value="1"/>
</dbReference>
<dbReference type="NCBIfam" id="TIGR01409">
    <property type="entry name" value="TAT_signal_seq"/>
    <property type="match status" value="1"/>
</dbReference>
<dbReference type="PANTHER" id="PTHR11709:SF394">
    <property type="entry name" value="FI03373P-RELATED"/>
    <property type="match status" value="1"/>
</dbReference>
<dbReference type="PANTHER" id="PTHR11709">
    <property type="entry name" value="MULTI-COPPER OXIDASE"/>
    <property type="match status" value="1"/>
</dbReference>
<dbReference type="Pfam" id="PF00394">
    <property type="entry name" value="Cu-oxidase"/>
    <property type="match status" value="1"/>
</dbReference>
<dbReference type="Pfam" id="PF07731">
    <property type="entry name" value="Cu-oxidase_2"/>
    <property type="match status" value="1"/>
</dbReference>
<dbReference type="Pfam" id="PF07732">
    <property type="entry name" value="Cu-oxidase_3"/>
    <property type="match status" value="1"/>
</dbReference>
<dbReference type="SUPFAM" id="SSF49503">
    <property type="entry name" value="Cupredoxins"/>
    <property type="match status" value="3"/>
</dbReference>
<dbReference type="PROSITE" id="PS00079">
    <property type="entry name" value="MULTICOPPER_OXIDASE1"/>
    <property type="match status" value="1"/>
</dbReference>
<dbReference type="PROSITE" id="PS00080">
    <property type="entry name" value="MULTICOPPER_OXIDASE2"/>
    <property type="match status" value="1"/>
</dbReference>
<dbReference type="PROSITE" id="PS51318">
    <property type="entry name" value="TAT"/>
    <property type="match status" value="1"/>
</dbReference>
<accession>P12374</accession>
<reference key="1">
    <citation type="journal article" date="1988" name="J. Bacteriol.">
        <title>Nucleotide sequence and organization of copper resistance genes from Pseudomonas syringae pv. tomato.</title>
        <authorList>
            <person name="Mellano M.A."/>
            <person name="Cooksey D.A."/>
        </authorList>
    </citation>
    <scope>NUCLEOTIDE SEQUENCE [GENOMIC DNA]</scope>
    <source>
        <strain>PT23.2</strain>
    </source>
</reference>
<reference key="2">
    <citation type="journal article" date="1991" name="Proc. Natl. Acad. Sci. U.S.A.">
        <title>Copper resistance in Pseudomonas syringae mediated by periplasmic and outer membrane proteins.</title>
        <authorList>
            <person name="Cha J.-S."/>
            <person name="Cooksey D.A."/>
        </authorList>
    </citation>
    <scope>CHARACTERIZATION</scope>
    <scope>PROTEIN SEQUENCE OF 33-37</scope>
    <source>
        <strain>PT23.2</strain>
    </source>
</reference>
<feature type="signal peptide" description="Tat-type signal" evidence="3 4">
    <location>
        <begin position="1"/>
        <end position="32"/>
    </location>
</feature>
<feature type="chain" id="PRO_0000002949" description="Copper resistance protein A">
    <location>
        <begin position="33"/>
        <end position="609"/>
    </location>
</feature>
<feature type="repeat" description="1">
    <location>
        <begin position="367"/>
        <end position="374"/>
    </location>
</feature>
<feature type="repeat" description="2">
    <location>
        <begin position="375"/>
        <end position="382"/>
    </location>
</feature>
<feature type="repeat" description="3">
    <location>
        <begin position="408"/>
        <end position="415"/>
    </location>
</feature>
<feature type="repeat" description="4">
    <location>
        <begin position="419"/>
        <end position="426"/>
    </location>
</feature>
<feature type="repeat" description="5">
    <location>
        <begin position="427"/>
        <end position="434"/>
    </location>
</feature>
<feature type="region of interest" description="5 X 8 AA tandem repeats of D-H-X-X-M-X-G-M">
    <location>
        <begin position="367"/>
        <end position="434"/>
    </location>
</feature>
<feature type="binding site" description="type 2 copper site" evidence="1">
    <location>
        <position position="100"/>
    </location>
    <ligand>
        <name>Cu cation</name>
        <dbReference type="ChEBI" id="CHEBI:23378"/>
        <label>1</label>
    </ligand>
</feature>
<feature type="binding site" description="type 3 copper site" evidence="1">
    <location>
        <position position="102"/>
    </location>
    <ligand>
        <name>Cu cation</name>
        <dbReference type="ChEBI" id="CHEBI:23378"/>
        <label>2</label>
    </ligand>
</feature>
<feature type="binding site" description="type 3 copper site" evidence="1">
    <location>
        <position position="142"/>
    </location>
    <ligand>
        <name>Cu cation</name>
        <dbReference type="ChEBI" id="CHEBI:23378"/>
        <label>2</label>
    </ligand>
</feature>
<feature type="binding site" description="type 3 copper site" evidence="1">
    <location>
        <position position="144"/>
    </location>
    <ligand>
        <name>Cu cation</name>
        <dbReference type="ChEBI" id="CHEBI:23378"/>
        <label>3</label>
    </ligand>
</feature>
<feature type="binding site" description="type 1 copper site" evidence="2">
    <location>
        <position position="542"/>
    </location>
    <ligand>
        <name>Cu cation</name>
        <dbReference type="ChEBI" id="CHEBI:23378"/>
        <label>4</label>
    </ligand>
</feature>
<feature type="binding site" description="type 2 copper site" evidence="2">
    <location>
        <position position="545"/>
    </location>
    <ligand>
        <name>Cu cation</name>
        <dbReference type="ChEBI" id="CHEBI:23378"/>
        <label>1</label>
    </ligand>
</feature>
<feature type="binding site" description="type 3 copper site" evidence="2">
    <location>
        <position position="547"/>
    </location>
    <ligand>
        <name>Cu cation</name>
        <dbReference type="ChEBI" id="CHEBI:23378"/>
        <label>3</label>
    </ligand>
</feature>
<feature type="binding site" description="type 3 copper site" evidence="2">
    <location>
        <position position="590"/>
    </location>
    <ligand>
        <name>Cu cation</name>
        <dbReference type="ChEBI" id="CHEBI:23378"/>
        <label>3</label>
    </ligand>
</feature>
<feature type="binding site" description="type 1 copper site" evidence="2">
    <location>
        <position position="591"/>
    </location>
    <ligand>
        <name>Cu cation</name>
        <dbReference type="ChEBI" id="CHEBI:23378"/>
        <label>4</label>
    </ligand>
</feature>
<feature type="binding site" description="type 3 copper site" evidence="2">
    <location>
        <position position="592"/>
    </location>
    <ligand>
        <name>Cu cation</name>
        <dbReference type="ChEBI" id="CHEBI:23378"/>
        <label>2</label>
    </ligand>
</feature>
<feature type="binding site" description="type 1 copper site" evidence="2">
    <location>
        <position position="596"/>
    </location>
    <ligand>
        <name>Cu cation</name>
        <dbReference type="ChEBI" id="CHEBI:23378"/>
        <label>4</label>
    </ligand>
</feature>
<feature type="binding site" description="type 1 copper site" evidence="2">
    <location>
        <position position="601"/>
    </location>
    <ligand>
        <name>Cu cation</name>
        <dbReference type="ChEBI" id="CHEBI:23378"/>
        <label>4</label>
    </ligand>
</feature>
<geneLocation type="plasmid">
    <name>pPT23D</name>
</geneLocation>
<proteinExistence type="evidence at protein level"/>
<keyword id="KW-0186">Copper</keyword>
<keyword id="KW-0903">Direct protein sequencing</keyword>
<keyword id="KW-0479">Metal-binding</keyword>
<keyword id="KW-0560">Oxidoreductase</keyword>
<keyword id="KW-0574">Periplasm</keyword>
<keyword id="KW-0614">Plasmid</keyword>
<keyword id="KW-0677">Repeat</keyword>
<keyword id="KW-0732">Signal</keyword>
<organism>
    <name type="scientific">Pseudomonas syringae pv. tomato</name>
    <dbReference type="NCBI Taxonomy" id="323"/>
    <lineage>
        <taxon>Bacteria</taxon>
        <taxon>Pseudomonadati</taxon>
        <taxon>Pseudomonadota</taxon>
        <taxon>Gammaproteobacteria</taxon>
        <taxon>Pseudomonadales</taxon>
        <taxon>Pseudomonadaceae</taxon>
        <taxon>Pseudomonas</taxon>
    </lineage>
</organism>
<gene>
    <name type="primary">copA</name>
</gene>
<evidence type="ECO:0000250" key="1"/>
<evidence type="ECO:0000255" key="2"/>
<evidence type="ECO:0000255" key="3">
    <source>
        <dbReference type="PROSITE-ProRule" id="PRU00648"/>
    </source>
</evidence>
<evidence type="ECO:0000269" key="4">
    <source>
    </source>
</evidence>
<evidence type="ECO:0000305" key="5"/>
<sequence length="609" mass="67355">MESRTSRRTFVKGLAAAGVLGGLGLWRSPSWAASGSPALSVLSGTEFDLSIGEMPVNITGRRRTAMAINGGLPGPLLRWKEGDTVTLRVRNRLDAATSIHWHGIILPPNMDGVPGLSFAGIEPGGVYVYQFKVQQNGTYWYHSHSGFQEQVGVYGPLVIEAKEPEPFKYDSEHVVMLTDWTDEDPVSLMRTLKKQSDYYNFHKRTVGDFVNDVADKGWAATVADRKMWAEMKMNPTDLADVSGATYTYLLNGQAPNMNWTGLFRPGEKLRLRFINGSAMTYFDIRIPGLKMTVVASDGQFVNPVEVDELRIAVAETFDVIVEPTAEAYTVFAQSMDRTGYARGTLAVREGLVAQVPPLDPRPLVTMDDMGMGGMDHGSMDGMSGMDSGADDGMQTMSSMGGDSMPAMDHSKMSTMQGMDHGAMSGMDHGAMGGMVMQSHPASENDNPLVDMQAMSPTAKLNDPGLGLRNNGRKVLTYADLKSTFEDPDGREPSRTIELHLTGHMEKFAWSFDGIKFADAQPLILKYGERVRIVLVNDTMMTHPIHLHGMWSDLEDEDGNFRVRKHTIDMPPGSKRSYRVTADALGRWAYHCHLLYHMEMGMFREVRVEE</sequence>
<comment type="function">
    <text>Mediates copper resistance by sequestration of copper in the periplasm along with the copper-binding protein CopC. May have oxidase activity.</text>
</comment>
<comment type="subcellular location">
    <subcellularLocation>
        <location>Periplasm</location>
    </subcellularLocation>
</comment>
<comment type="induction">
    <text>By copper.</text>
</comment>
<comment type="PTM">
    <text>Predicted to be exported by the Tat system. The position of the signal peptide cleavage has been experimentally proven.</text>
</comment>
<comment type="similarity">
    <text evidence="5">Belongs to the multicopper oxidase family. CopA subfamily.</text>
</comment>
<protein>
    <recommendedName>
        <fullName>Copper resistance protein A</fullName>
    </recommendedName>
</protein>
<name>COPA_PSEUB</name>